<protein>
    <recommendedName>
        <fullName evidence="1">Nuclear export protein</fullName>
        <shortName evidence="1">NEP</shortName>
    </recommendedName>
    <alternativeName>
        <fullName evidence="1">Non-structural protein 2</fullName>
        <shortName evidence="1">NS2</shortName>
    </alternativeName>
</protein>
<accession>Q6XTC3</accession>
<name>NEP_I68A5</name>
<reference key="1">
    <citation type="journal article" date="2004" name="Virology">
        <title>Genetic analysis of human H2N2 and early H3N2 influenza viruses, 1957-1972: evidence for genetic divergence and multiple reassortment events.</title>
        <authorList>
            <person name="Lindstrom S.E."/>
            <person name="Cox N.J."/>
            <person name="Klimov A."/>
        </authorList>
    </citation>
    <scope>NUCLEOTIDE SEQUENCE [GENOMIC RNA]</scope>
</reference>
<sequence>MDSNTVSSFQDILLRMSKMQLGSSSEDLNGMITQFESLKLYRDSLGEAVMRMGDLHSLQNRNGKWREQLGQKFEEIRWLIEEVRHRLKITENSFEQITFMQALQLLFEVEQEIRTFSFQLI</sequence>
<evidence type="ECO:0000255" key="1">
    <source>
        <dbReference type="HAMAP-Rule" id="MF_04067"/>
    </source>
</evidence>
<comment type="function">
    <text evidence="1">Mediates the nuclear export of encapsidated genomic RNAs (ribonucleoproteins, RNPs). Acts as an adapter between viral RNPs complexes and the nuclear export machinery of the cell. Possesses no intrinsic RNA-binding activity, but includes a C-terminal M1-binding domain. This domain is believed to allow recognition of RNPs bound to the protein M1. Since protein M1 is not available in large quantities before late stages of infection, such an indirect recognition mechanism probably ensures that genomic RNPs are not exported from the host nucleus until sufficient quantities of viral mRNA and progeny genomic RNA have been synthesized. Furthermore, the RNPs enter the host cytoplasm only when associated with the M1 protein that is necessary to guide them to the plasma membrane. May down-regulate viral RNA synthesis when overproduced.</text>
</comment>
<comment type="subunit">
    <text evidence="1">Interacts with protein M1. May interact with host nucleoporin RAB/HRB and exportin XPO1/CRM1.</text>
</comment>
<comment type="subcellular location">
    <subcellularLocation>
        <location evidence="1">Virion</location>
    </subcellularLocation>
    <subcellularLocation>
        <location evidence="1">Host nucleus</location>
    </subcellularLocation>
</comment>
<comment type="alternative products">
    <event type="alternative splicing"/>
    <isoform>
        <id>Q6XTC3-1</id>
        <name>NEP</name>
        <name>NS2</name>
        <sequence type="displayed"/>
    </isoform>
    <isoform>
        <id>Q6XTC2-1</id>
        <name>NS1</name>
        <sequence type="external"/>
    </isoform>
</comment>
<comment type="similarity">
    <text evidence="1">Belongs to the influenza viruses NEP family.</text>
</comment>
<organismHost>
    <name type="scientific">Aves</name>
    <dbReference type="NCBI Taxonomy" id="8782"/>
</organismHost>
<organismHost>
    <name type="scientific">Homo sapiens</name>
    <name type="common">Human</name>
    <dbReference type="NCBI Taxonomy" id="9606"/>
</organismHost>
<proteinExistence type="inferred from homology"/>
<feature type="chain" id="PRO_0000324203" description="Nuclear export protein">
    <location>
        <begin position="1"/>
        <end position="121"/>
    </location>
</feature>
<feature type="short sequence motif" description="Nuclear export signal" evidence="1">
    <location>
        <begin position="12"/>
        <end position="21"/>
    </location>
</feature>
<feature type="short sequence motif" description="Nuclear export signal" evidence="1">
    <location>
        <begin position="85"/>
        <end position="94"/>
    </location>
</feature>
<gene>
    <name evidence="1" type="primary">NS</name>
</gene>
<keyword id="KW-0025">Alternative splicing</keyword>
<keyword id="KW-1048">Host nucleus</keyword>
<keyword id="KW-0945">Host-virus interaction</keyword>
<keyword id="KW-0813">Transport</keyword>
<keyword id="KW-0946">Virion</keyword>
<dbReference type="EMBL" id="AY210191">
    <property type="protein sequence ID" value="AAO46648.1"/>
    <property type="molecule type" value="Genomic_RNA"/>
</dbReference>
<dbReference type="RefSeq" id="YP_308869.1">
    <molecule id="Q6XTC3-1"/>
    <property type="nucleotide sequence ID" value="NC_007380.1"/>
</dbReference>
<dbReference type="SMR" id="Q6XTC3"/>
<dbReference type="KEGG" id="vg:3655110"/>
<dbReference type="OrthoDB" id="16129at10239"/>
<dbReference type="Proteomes" id="UP000200640">
    <property type="component" value="Genome"/>
</dbReference>
<dbReference type="GO" id="GO:0042025">
    <property type="term" value="C:host cell nucleus"/>
    <property type="evidence" value="ECO:0007669"/>
    <property type="project" value="UniProtKB-SubCell"/>
</dbReference>
<dbReference type="GO" id="GO:0044423">
    <property type="term" value="C:virion component"/>
    <property type="evidence" value="ECO:0007669"/>
    <property type="project" value="UniProtKB-UniRule"/>
</dbReference>
<dbReference type="GO" id="GO:0039675">
    <property type="term" value="P:exit of virus from host cell nucleus through nuclear pore"/>
    <property type="evidence" value="ECO:0007669"/>
    <property type="project" value="UniProtKB-UniRule"/>
</dbReference>
<dbReference type="Gene3D" id="1.10.287.230">
    <property type="match status" value="1"/>
</dbReference>
<dbReference type="Gene3D" id="1.10.287.10">
    <property type="entry name" value="S15/NS1, RNA-binding"/>
    <property type="match status" value="1"/>
</dbReference>
<dbReference type="HAMAP" id="MF_04067">
    <property type="entry name" value="INFV_NEP"/>
    <property type="match status" value="1"/>
</dbReference>
<dbReference type="InterPro" id="IPR000968">
    <property type="entry name" value="Flu_NS2"/>
</dbReference>
<dbReference type="Pfam" id="PF00601">
    <property type="entry name" value="Flu_NS2"/>
    <property type="match status" value="1"/>
</dbReference>
<dbReference type="SUPFAM" id="SSF101156">
    <property type="entry name" value="Nonstructural protein ns2, Nep, M1-binding domain"/>
    <property type="match status" value="1"/>
</dbReference>
<organism>
    <name type="scientific">Influenza A virus (strain A/Korea/426/1968 H2N2)</name>
    <dbReference type="NCBI Taxonomy" id="488241"/>
    <lineage>
        <taxon>Viruses</taxon>
        <taxon>Riboviria</taxon>
        <taxon>Orthornavirae</taxon>
        <taxon>Negarnaviricota</taxon>
        <taxon>Polyploviricotina</taxon>
        <taxon>Insthoviricetes</taxon>
        <taxon>Articulavirales</taxon>
        <taxon>Orthomyxoviridae</taxon>
        <taxon>Alphainfluenzavirus</taxon>
        <taxon>Alphainfluenzavirus influenzae</taxon>
        <taxon>Influenza A virus</taxon>
    </lineage>
</organism>